<reference key="1">
    <citation type="journal article" date="2005" name="Science">
        <title>The transcriptional landscape of the mammalian genome.</title>
        <authorList>
            <person name="Carninci P."/>
            <person name="Kasukawa T."/>
            <person name="Katayama S."/>
            <person name="Gough J."/>
            <person name="Frith M.C."/>
            <person name="Maeda N."/>
            <person name="Oyama R."/>
            <person name="Ravasi T."/>
            <person name="Lenhard B."/>
            <person name="Wells C."/>
            <person name="Kodzius R."/>
            <person name="Shimokawa K."/>
            <person name="Bajic V.B."/>
            <person name="Brenner S.E."/>
            <person name="Batalov S."/>
            <person name="Forrest A.R."/>
            <person name="Zavolan M."/>
            <person name="Davis M.J."/>
            <person name="Wilming L.G."/>
            <person name="Aidinis V."/>
            <person name="Allen J.E."/>
            <person name="Ambesi-Impiombato A."/>
            <person name="Apweiler R."/>
            <person name="Aturaliya R.N."/>
            <person name="Bailey T.L."/>
            <person name="Bansal M."/>
            <person name="Baxter L."/>
            <person name="Beisel K.W."/>
            <person name="Bersano T."/>
            <person name="Bono H."/>
            <person name="Chalk A.M."/>
            <person name="Chiu K.P."/>
            <person name="Choudhary V."/>
            <person name="Christoffels A."/>
            <person name="Clutterbuck D.R."/>
            <person name="Crowe M.L."/>
            <person name="Dalla E."/>
            <person name="Dalrymple B.P."/>
            <person name="de Bono B."/>
            <person name="Della Gatta G."/>
            <person name="di Bernardo D."/>
            <person name="Down T."/>
            <person name="Engstrom P."/>
            <person name="Fagiolini M."/>
            <person name="Faulkner G."/>
            <person name="Fletcher C.F."/>
            <person name="Fukushima T."/>
            <person name="Furuno M."/>
            <person name="Futaki S."/>
            <person name="Gariboldi M."/>
            <person name="Georgii-Hemming P."/>
            <person name="Gingeras T.R."/>
            <person name="Gojobori T."/>
            <person name="Green R.E."/>
            <person name="Gustincich S."/>
            <person name="Harbers M."/>
            <person name="Hayashi Y."/>
            <person name="Hensch T.K."/>
            <person name="Hirokawa N."/>
            <person name="Hill D."/>
            <person name="Huminiecki L."/>
            <person name="Iacono M."/>
            <person name="Ikeo K."/>
            <person name="Iwama A."/>
            <person name="Ishikawa T."/>
            <person name="Jakt M."/>
            <person name="Kanapin A."/>
            <person name="Katoh M."/>
            <person name="Kawasawa Y."/>
            <person name="Kelso J."/>
            <person name="Kitamura H."/>
            <person name="Kitano H."/>
            <person name="Kollias G."/>
            <person name="Krishnan S.P."/>
            <person name="Kruger A."/>
            <person name="Kummerfeld S.K."/>
            <person name="Kurochkin I.V."/>
            <person name="Lareau L.F."/>
            <person name="Lazarevic D."/>
            <person name="Lipovich L."/>
            <person name="Liu J."/>
            <person name="Liuni S."/>
            <person name="McWilliam S."/>
            <person name="Madan Babu M."/>
            <person name="Madera M."/>
            <person name="Marchionni L."/>
            <person name="Matsuda H."/>
            <person name="Matsuzawa S."/>
            <person name="Miki H."/>
            <person name="Mignone F."/>
            <person name="Miyake S."/>
            <person name="Morris K."/>
            <person name="Mottagui-Tabar S."/>
            <person name="Mulder N."/>
            <person name="Nakano N."/>
            <person name="Nakauchi H."/>
            <person name="Ng P."/>
            <person name="Nilsson R."/>
            <person name="Nishiguchi S."/>
            <person name="Nishikawa S."/>
            <person name="Nori F."/>
            <person name="Ohara O."/>
            <person name="Okazaki Y."/>
            <person name="Orlando V."/>
            <person name="Pang K.C."/>
            <person name="Pavan W.J."/>
            <person name="Pavesi G."/>
            <person name="Pesole G."/>
            <person name="Petrovsky N."/>
            <person name="Piazza S."/>
            <person name="Reed J."/>
            <person name="Reid J.F."/>
            <person name="Ring B.Z."/>
            <person name="Ringwald M."/>
            <person name="Rost B."/>
            <person name="Ruan Y."/>
            <person name="Salzberg S.L."/>
            <person name="Sandelin A."/>
            <person name="Schneider C."/>
            <person name="Schoenbach C."/>
            <person name="Sekiguchi K."/>
            <person name="Semple C.A."/>
            <person name="Seno S."/>
            <person name="Sessa L."/>
            <person name="Sheng Y."/>
            <person name="Shibata Y."/>
            <person name="Shimada H."/>
            <person name="Shimada K."/>
            <person name="Silva D."/>
            <person name="Sinclair B."/>
            <person name="Sperling S."/>
            <person name="Stupka E."/>
            <person name="Sugiura K."/>
            <person name="Sultana R."/>
            <person name="Takenaka Y."/>
            <person name="Taki K."/>
            <person name="Tammoja K."/>
            <person name="Tan S.L."/>
            <person name="Tang S."/>
            <person name="Taylor M.S."/>
            <person name="Tegner J."/>
            <person name="Teichmann S.A."/>
            <person name="Ueda H.R."/>
            <person name="van Nimwegen E."/>
            <person name="Verardo R."/>
            <person name="Wei C.L."/>
            <person name="Yagi K."/>
            <person name="Yamanishi H."/>
            <person name="Zabarovsky E."/>
            <person name="Zhu S."/>
            <person name="Zimmer A."/>
            <person name="Hide W."/>
            <person name="Bult C."/>
            <person name="Grimmond S.M."/>
            <person name="Teasdale R.D."/>
            <person name="Liu E.T."/>
            <person name="Brusic V."/>
            <person name="Quackenbush J."/>
            <person name="Wahlestedt C."/>
            <person name="Mattick J.S."/>
            <person name="Hume D.A."/>
            <person name="Kai C."/>
            <person name="Sasaki D."/>
            <person name="Tomaru Y."/>
            <person name="Fukuda S."/>
            <person name="Kanamori-Katayama M."/>
            <person name="Suzuki M."/>
            <person name="Aoki J."/>
            <person name="Arakawa T."/>
            <person name="Iida J."/>
            <person name="Imamura K."/>
            <person name="Itoh M."/>
            <person name="Kato T."/>
            <person name="Kawaji H."/>
            <person name="Kawagashira N."/>
            <person name="Kawashima T."/>
            <person name="Kojima M."/>
            <person name="Kondo S."/>
            <person name="Konno H."/>
            <person name="Nakano K."/>
            <person name="Ninomiya N."/>
            <person name="Nishio T."/>
            <person name="Okada M."/>
            <person name="Plessy C."/>
            <person name="Shibata K."/>
            <person name="Shiraki T."/>
            <person name="Suzuki S."/>
            <person name="Tagami M."/>
            <person name="Waki K."/>
            <person name="Watahiki A."/>
            <person name="Okamura-Oho Y."/>
            <person name="Suzuki H."/>
            <person name="Kawai J."/>
            <person name="Hayashizaki Y."/>
        </authorList>
    </citation>
    <scope>NUCLEOTIDE SEQUENCE [LARGE SCALE MRNA]</scope>
    <source>
        <strain>DBA/2J</strain>
    </source>
</reference>
<reference key="2">
    <citation type="journal article" date="2004" name="Genome Res.">
        <title>The status, quality, and expansion of the NIH full-length cDNA project: the Mammalian Gene Collection (MGC).</title>
        <authorList>
            <consortium name="The MGC Project Team"/>
        </authorList>
    </citation>
    <scope>NUCLEOTIDE SEQUENCE [LARGE SCALE MRNA]</scope>
    <source>
        <strain>C57BL/6J</strain>
        <tissue>Eye</tissue>
    </source>
</reference>
<comment type="function">
    <text evidence="2">Part of the glycosylphosphatidylinositol-N-acetylglucosaminyltransferase (GPI-GnT) complex that catalyzes the transfer of N-acetylglucosamine from UDP-N-acetylglucosamine to phosphatidylinositol and participates in the first step of GPI biosynthesis.</text>
</comment>
<comment type="pathway">
    <text evidence="2">Glycolipid biosynthesis; glycosylphosphatidylinositol-anchor biosynthesis.</text>
</comment>
<comment type="subunit">
    <text evidence="2">Component of the glycosylphosphatidylinositol-N-acetylglucosaminyltransferase (GPI-GnT) complex composed at least by PIGA, PIGC, PIGH, PIGP, PIGQ, PIGY and DPM2. Interacts with PIGQ.</text>
</comment>
<comment type="subcellular location">
    <subcellularLocation>
        <location evidence="1">Cytoplasm</location>
    </subcellularLocation>
</comment>
<comment type="similarity">
    <text evidence="3">Belongs to the PIGH family.</text>
</comment>
<proteinExistence type="evidence at transcript level"/>
<sequence length="188" mass="21078">MEDEKSFSDICGGRLALRCRYYSPYCREFGLSSARLSLCSLTAVTCAVWLAAYGLFTLCENSMVLSATIFITILGLLGYLHFVKIDQETLLIIDSLGIQMTSSYASGKESTTFIEMDKVKDIIINEAIYMQKVIYYLCILLKEPGKPHEISRVVPVFQSAKPRLDCLIEVYRSCQEVLAHQKATATSL</sequence>
<accession>Q5M9N4</accession>
<feature type="chain" id="PRO_0000281862" description="Phosphatidylinositol N-acetylglucosaminyltransferase subunit H">
    <location>
        <begin position="1"/>
        <end position="188"/>
    </location>
</feature>
<organism>
    <name type="scientific">Mus musculus</name>
    <name type="common">Mouse</name>
    <dbReference type="NCBI Taxonomy" id="10090"/>
    <lineage>
        <taxon>Eukaryota</taxon>
        <taxon>Metazoa</taxon>
        <taxon>Chordata</taxon>
        <taxon>Craniata</taxon>
        <taxon>Vertebrata</taxon>
        <taxon>Euteleostomi</taxon>
        <taxon>Mammalia</taxon>
        <taxon>Eutheria</taxon>
        <taxon>Euarchontoglires</taxon>
        <taxon>Glires</taxon>
        <taxon>Rodentia</taxon>
        <taxon>Myomorpha</taxon>
        <taxon>Muroidea</taxon>
        <taxon>Muridae</taxon>
        <taxon>Murinae</taxon>
        <taxon>Mus</taxon>
        <taxon>Mus</taxon>
    </lineage>
</organism>
<name>PIGH_MOUSE</name>
<dbReference type="EMBL" id="AK167892">
    <property type="protein sequence ID" value="BAE39904.1"/>
    <property type="molecule type" value="mRNA"/>
</dbReference>
<dbReference type="EMBL" id="BC086806">
    <property type="protein sequence ID" value="AAH86806.1"/>
    <property type="molecule type" value="mRNA"/>
</dbReference>
<dbReference type="CCDS" id="CCDS26006.1"/>
<dbReference type="RefSeq" id="NP_084264.1">
    <property type="nucleotide sequence ID" value="NM_029988.3"/>
</dbReference>
<dbReference type="FunCoup" id="Q5M9N4">
    <property type="interactions" value="482"/>
</dbReference>
<dbReference type="STRING" id="10090.ENSMUSP00000072018"/>
<dbReference type="PhosphoSitePlus" id="Q5M9N4"/>
<dbReference type="PaxDb" id="10090-ENSMUSP00000072018"/>
<dbReference type="ProteomicsDB" id="288207"/>
<dbReference type="Antibodypedia" id="24854">
    <property type="antibodies" value="147 antibodies from 23 providers"/>
</dbReference>
<dbReference type="DNASU" id="110417"/>
<dbReference type="Ensembl" id="ENSMUST00000072154.9">
    <property type="protein sequence ID" value="ENSMUSP00000072018.8"/>
    <property type="gene ID" value="ENSMUSG00000021120.12"/>
</dbReference>
<dbReference type="GeneID" id="110417"/>
<dbReference type="KEGG" id="mmu:110417"/>
<dbReference type="UCSC" id="uc007nzs.2">
    <property type="organism name" value="mouse"/>
</dbReference>
<dbReference type="AGR" id="MGI:99463"/>
<dbReference type="CTD" id="5283"/>
<dbReference type="MGI" id="MGI:99463">
    <property type="gene designation" value="Pigh"/>
</dbReference>
<dbReference type="VEuPathDB" id="HostDB:ENSMUSG00000021120"/>
<dbReference type="eggNOG" id="KOG4551">
    <property type="taxonomic scope" value="Eukaryota"/>
</dbReference>
<dbReference type="GeneTree" id="ENSGT00390000011890"/>
<dbReference type="HOGENOM" id="CLU_102225_1_0_1"/>
<dbReference type="InParanoid" id="Q5M9N4"/>
<dbReference type="OMA" id="RETTTFI"/>
<dbReference type="OrthoDB" id="6256716at2759"/>
<dbReference type="PhylomeDB" id="Q5M9N4"/>
<dbReference type="TreeFam" id="TF324479"/>
<dbReference type="Reactome" id="R-MMU-162710">
    <property type="pathway name" value="Synthesis of glycosylphosphatidylinositol (GPI)"/>
</dbReference>
<dbReference type="UniPathway" id="UPA00196"/>
<dbReference type="BioGRID-ORCS" id="110417">
    <property type="hits" value="4 hits in 78 CRISPR screens"/>
</dbReference>
<dbReference type="PRO" id="PR:Q5M9N4"/>
<dbReference type="Proteomes" id="UP000000589">
    <property type="component" value="Chromosome 12"/>
</dbReference>
<dbReference type="RNAct" id="Q5M9N4">
    <property type="molecule type" value="protein"/>
</dbReference>
<dbReference type="Bgee" id="ENSMUSG00000021120">
    <property type="expression patterns" value="Expressed in paneth cell and 242 other cell types or tissues"/>
</dbReference>
<dbReference type="ExpressionAtlas" id="Q5M9N4">
    <property type="expression patterns" value="baseline and differential"/>
</dbReference>
<dbReference type="GO" id="GO:0000506">
    <property type="term" value="C:glycosylphosphatidylinositol-N-acetylglucosaminyltransferase (GPI-GnT) complex"/>
    <property type="evidence" value="ECO:0000250"/>
    <property type="project" value="UniProtKB"/>
</dbReference>
<dbReference type="GO" id="GO:0006506">
    <property type="term" value="P:GPI anchor biosynthetic process"/>
    <property type="evidence" value="ECO:0000250"/>
    <property type="project" value="UniProtKB"/>
</dbReference>
<dbReference type="InterPro" id="IPR019328">
    <property type="entry name" value="GPI-GlcNAc_Trfase_PIG-H_dom"/>
</dbReference>
<dbReference type="InterPro" id="IPR044215">
    <property type="entry name" value="PIG-H"/>
</dbReference>
<dbReference type="PANTHER" id="PTHR15231">
    <property type="entry name" value="PHOSPHATIDYLINOSITOL N-ACETYLGLUCOSAMINYLTRANSFERASE SUBUNIT H"/>
    <property type="match status" value="1"/>
</dbReference>
<dbReference type="PANTHER" id="PTHR15231:SF1">
    <property type="entry name" value="PHOSPHATIDYLINOSITOL N-ACETYLGLUCOSAMINYLTRANSFERASE SUBUNIT H"/>
    <property type="match status" value="1"/>
</dbReference>
<dbReference type="Pfam" id="PF10181">
    <property type="entry name" value="PIG-H"/>
    <property type="match status" value="1"/>
</dbReference>
<gene>
    <name evidence="4" type="primary">Pigh</name>
</gene>
<protein>
    <recommendedName>
        <fullName evidence="3">Phosphatidylinositol N-acetylglucosaminyltransferase subunit H</fullName>
    </recommendedName>
    <alternativeName>
        <fullName>Phosphatidylinositol-glycan biosynthesis class H protein</fullName>
        <shortName>PIG-H</shortName>
    </alternativeName>
</protein>
<evidence type="ECO:0000250" key="1"/>
<evidence type="ECO:0000250" key="2">
    <source>
        <dbReference type="UniProtKB" id="Q14442"/>
    </source>
</evidence>
<evidence type="ECO:0000305" key="3"/>
<evidence type="ECO:0000312" key="4">
    <source>
        <dbReference type="MGI" id="MGI:99463"/>
    </source>
</evidence>
<keyword id="KW-0963">Cytoplasm</keyword>
<keyword id="KW-1185">Reference proteome</keyword>